<accession>D2Y2H1</accession>
<reference key="1">
    <citation type="journal article" date="2010" name="J. Proteome Res.">
        <title>Molecular diversification of peptide toxins from the tarantula Haplopelma hainanum (Ornithoctonus hainana) venom based on transcriptomic, peptidomic, and genomic analyses.</title>
        <authorList>
            <person name="Tang X."/>
            <person name="Zhang Y."/>
            <person name="Hu W."/>
            <person name="Xu D."/>
            <person name="Tao H."/>
            <person name="Yang X."/>
            <person name="Li Y."/>
            <person name="Jiang L."/>
            <person name="Liang S."/>
        </authorList>
    </citation>
    <scope>NUCLEOTIDE SEQUENCE [LARGE SCALE MRNA]</scope>
    <source>
        <tissue>Venom gland</tissue>
    </source>
</reference>
<proteinExistence type="evidence at transcript level"/>
<evidence type="ECO:0000250" key="1"/>
<evidence type="ECO:0000255" key="2"/>
<dbReference type="EMBL" id="GU293048">
    <property type="protein sequence ID" value="ADB56864.1"/>
    <property type="molecule type" value="mRNA"/>
</dbReference>
<dbReference type="ArachnoServer" id="AS001581">
    <property type="toxin name" value="U14-theraphotoxin-Hhn1c"/>
</dbReference>
<dbReference type="GO" id="GO:0005576">
    <property type="term" value="C:extracellular region"/>
    <property type="evidence" value="ECO:0007669"/>
    <property type="project" value="UniProtKB-SubCell"/>
</dbReference>
<dbReference type="GO" id="GO:0099106">
    <property type="term" value="F:ion channel regulator activity"/>
    <property type="evidence" value="ECO:0007669"/>
    <property type="project" value="UniProtKB-KW"/>
</dbReference>
<dbReference type="GO" id="GO:0090729">
    <property type="term" value="F:toxin activity"/>
    <property type="evidence" value="ECO:0007669"/>
    <property type="project" value="UniProtKB-KW"/>
</dbReference>
<keyword id="KW-1015">Disulfide bond</keyword>
<keyword id="KW-0872">Ion channel impairing toxin</keyword>
<keyword id="KW-0960">Knottin</keyword>
<keyword id="KW-0964">Secreted</keyword>
<keyword id="KW-0732">Signal</keyword>
<keyword id="KW-0800">Toxin</keyword>
<comment type="function">
    <text>Putative ion channel inhibitor.</text>
</comment>
<comment type="subcellular location">
    <subcellularLocation>
        <location evidence="1">Secreted</location>
    </subcellularLocation>
</comment>
<comment type="tissue specificity">
    <text>Expressed by the venom gland.</text>
</comment>
<comment type="domain">
    <text evidence="1">The presence of a 'disulfide through disulfide knot' structurally defines this protein as a knottin.</text>
</comment>
<comment type="similarity">
    <text>Belongs to the neurotoxin 25 family. F7 subfamily.</text>
</comment>
<feature type="signal peptide" evidence="2">
    <location>
        <begin position="1"/>
        <end position="18"/>
    </location>
</feature>
<feature type="propeptide" id="PRO_0000401041" evidence="1">
    <location>
        <begin position="19"/>
        <end position="46"/>
    </location>
</feature>
<feature type="peptide" id="PRO_0000401042" description="Hainantoxin-XVIII-3">
    <location>
        <begin position="47"/>
        <end position="109"/>
    </location>
</feature>
<feature type="disulfide bond" evidence="1">
    <location>
        <begin position="47"/>
        <end position="62"/>
    </location>
</feature>
<feature type="disulfide bond" evidence="1">
    <location>
        <begin position="55"/>
        <end position="68"/>
    </location>
</feature>
<feature type="disulfide bond" evidence="1">
    <location>
        <begin position="59"/>
        <end position="108"/>
    </location>
</feature>
<feature type="disulfide bond" evidence="1">
    <location>
        <begin position="61"/>
        <end position="81"/>
    </location>
</feature>
<name>H18C1_CYRHA</name>
<sequence length="109" mass="11945">MKLSIIIIATSLVIAVVAFPSKDSKAIENDKTEQRMEIVVQETARACSKQIGDKCKRNCECCRKTVVCGTIYVGGKEVNQCMDKTSDNAILNGLGKGMNFIENTFSFCV</sequence>
<protein>
    <recommendedName>
        <fullName>Hainantoxin-XVIII-3</fullName>
        <shortName>HNTX-XVIII-3</shortName>
    </recommendedName>
</protein>
<organism>
    <name type="scientific">Cyriopagopus hainanus</name>
    <name type="common">Chinese bird spider</name>
    <name type="synonym">Haplopelma hainanum</name>
    <dbReference type="NCBI Taxonomy" id="209901"/>
    <lineage>
        <taxon>Eukaryota</taxon>
        <taxon>Metazoa</taxon>
        <taxon>Ecdysozoa</taxon>
        <taxon>Arthropoda</taxon>
        <taxon>Chelicerata</taxon>
        <taxon>Arachnida</taxon>
        <taxon>Araneae</taxon>
        <taxon>Mygalomorphae</taxon>
        <taxon>Theraphosidae</taxon>
        <taxon>Haplopelma</taxon>
    </lineage>
</organism>